<accession>P45369</accession>
<accession>D3RUY6</accession>
<sequence length="394" mass="41129">MNENIVIVDAGRSAIGTFSGSLSSLSATEIGTAVLKGLLARTGLAPEQIDEVILGQVLTAGVGQNPARQTTLKAGLPHSVPAMTINKVCGSGLKAVHLAMQAIACGDADIVIAGGQESMSQSSHVLPRSRDGQRMGDWSMKDTMIVDGLWDAFNNYHMGTTAENIAQKYGFTREQQDAFAAASQQKTEAAQKAGRFQDEIIPIEIPQRKGDPKVFDADEFPRHGTTAESLGKLRPAFSRDGSVTAGNASGINDGAAMVVVMKESKAKELGLKPMARLVAFASAGVDPAIMGTGPIPASTKCLEKAGWTPADLDLIEANEAFAAQAMSVNQDMGWDLSKVNVNGGAIAIGHPIGASGARVLVTLLYEMQKRDAKKGLATLCIGGGQGVALAVERM</sequence>
<comment type="catalytic activity">
    <reaction evidence="3">
        <text>2 acetyl-CoA = acetoacetyl-CoA + CoA</text>
        <dbReference type="Rhea" id="RHEA:21036"/>
        <dbReference type="ChEBI" id="CHEBI:57286"/>
        <dbReference type="ChEBI" id="CHEBI:57287"/>
        <dbReference type="ChEBI" id="CHEBI:57288"/>
        <dbReference type="EC" id="2.3.1.9"/>
    </reaction>
</comment>
<comment type="pathway">
    <text evidence="4">Biopolymer metabolism; poly-(R)-3-hydroxybutanoate biosynthesis.</text>
</comment>
<comment type="pathway">
    <text>Metabolic intermediate biosynthesis; (R)-mevalonate biosynthesis; (R)-mevalonate from acetyl-CoA: step 1/3.</text>
</comment>
<comment type="subunit">
    <text evidence="2">Homotetramer.</text>
</comment>
<comment type="subcellular location">
    <subcellularLocation>
        <location>Cytoplasm</location>
    </subcellularLocation>
</comment>
<comment type="similarity">
    <text evidence="7">Belongs to the thiolase-like superfamily. Thiolase family.</text>
</comment>
<evidence type="ECO:0000250" key="1"/>
<evidence type="ECO:0000250" key="2">
    <source>
        <dbReference type="UniProtKB" id="P14611"/>
    </source>
</evidence>
<evidence type="ECO:0000255" key="3">
    <source>
        <dbReference type="PROSITE-ProRule" id="PRU10020"/>
    </source>
</evidence>
<evidence type="ECO:0000269" key="4">
    <source>
    </source>
</evidence>
<evidence type="ECO:0000303" key="5">
    <source>
    </source>
</evidence>
<evidence type="ECO:0000303" key="6">
    <source>
    </source>
</evidence>
<evidence type="ECO:0000305" key="7"/>
<proteinExistence type="inferred from homology"/>
<organism>
    <name type="scientific">Allochromatium vinosum (strain ATCC 17899 / DSM 180 / NBRC 103801 / NCIMB 10441 / D)</name>
    <name type="common">Chromatium vinosum</name>
    <dbReference type="NCBI Taxonomy" id="572477"/>
    <lineage>
        <taxon>Bacteria</taxon>
        <taxon>Pseudomonadati</taxon>
        <taxon>Pseudomonadota</taxon>
        <taxon>Gammaproteobacteria</taxon>
        <taxon>Chromatiales</taxon>
        <taxon>Chromatiaceae</taxon>
        <taxon>Allochromatium</taxon>
    </lineage>
</organism>
<feature type="chain" id="PRO_0000206419" description="Acetyl-CoA acetyltransferase">
    <location>
        <begin position="1"/>
        <end position="394"/>
    </location>
</feature>
<feature type="active site" description="Acyl-thioester intermediate" evidence="1">
    <location>
        <position position="89"/>
    </location>
</feature>
<feature type="active site" description="Proton acceptor" evidence="3">
    <location>
        <position position="350"/>
    </location>
</feature>
<feature type="active site" description="Proton acceptor" evidence="3">
    <location>
        <position position="380"/>
    </location>
</feature>
<feature type="sequence conflict" description="In Ref. 1; AAA23322." evidence="7" ref="1">
    <original>N</original>
    <variation>S</variation>
    <location>
        <position position="2"/>
    </location>
</feature>
<feature type="sequence conflict" description="In Ref. 1; AAA23322." evidence="7" ref="1">
    <original>S</original>
    <variation>G</variation>
    <location>
        <position position="19"/>
    </location>
</feature>
<feature type="sequence conflict" description="In Ref. 1; AAA23322." evidence="7" ref="1">
    <original>K</original>
    <variation>H</variation>
    <location>
        <position position="73"/>
    </location>
</feature>
<feature type="sequence conflict" description="In Ref. 1; AAA23322." evidence="7" ref="1">
    <original>R</original>
    <variation>K</variation>
    <location>
        <position position="239"/>
    </location>
</feature>
<name>THIL_ALLVD</name>
<keyword id="KW-0012">Acyltransferase</keyword>
<keyword id="KW-0963">Cytoplasm</keyword>
<keyword id="KW-0583">PHB biosynthesis</keyword>
<keyword id="KW-1185">Reference proteome</keyword>
<keyword id="KW-0808">Transferase</keyword>
<reference key="1">
    <citation type="journal article" date="1992" name="Eur. J. Biochem.">
        <title>Cloning and nucleotide sequences of genes relevant for biosynthesis of poly(3-hydroxybutyric acid) in Chromatium vinosum strain D.</title>
        <authorList>
            <person name="Liebergesell M."/>
            <person name="Steinbuechel A."/>
        </authorList>
    </citation>
    <scope>NUCLEOTIDE SEQUENCE [GENOMIC DNA]</scope>
    <scope>PATHWAY</scope>
    <source>
        <strain>ATCC 17899 / DSM 180 / NBRC 103801 / NCIMB 10441 / D</strain>
    </source>
</reference>
<reference key="2">
    <citation type="journal article" date="2011" name="Stand. Genomic Sci.">
        <title>Complete genome sequence of Allochromatium vinosum DSM 180(T).</title>
        <authorList>
            <person name="Weissgerber T."/>
            <person name="Zigann R."/>
            <person name="Bruce D."/>
            <person name="Chang Y.J."/>
            <person name="Detter J.C."/>
            <person name="Han C."/>
            <person name="Hauser L."/>
            <person name="Jeffries C.D."/>
            <person name="Land M."/>
            <person name="Munk A.C."/>
            <person name="Tapia R."/>
            <person name="Dahl C."/>
        </authorList>
    </citation>
    <scope>NUCLEOTIDE SEQUENCE [LARGE SCALE GENOMIC DNA]</scope>
    <source>
        <strain>ATCC 17899 / DSM 180 / NBRC 103801 / NCIMB 10441 / D</strain>
    </source>
</reference>
<reference key="3">
    <citation type="journal article" date="1992" name="FEMS Microbiol. Rev.">
        <title>Molecular basis for biosynthesis and accumulation of polyhydroxyalkanoic acids in bacteria.</title>
        <authorList>
            <person name="Steinbuechel A."/>
            <person name="Hustede E."/>
            <person name="Liebergesell M."/>
            <person name="Pieper U."/>
            <person name="Timm A."/>
            <person name="Valentin H."/>
        </authorList>
    </citation>
    <scope>GENE NAME</scope>
</reference>
<dbReference type="EC" id="2.3.1.9"/>
<dbReference type="EMBL" id="L01112">
    <property type="protein sequence ID" value="AAA23322.1"/>
    <property type="molecule type" value="Genomic_DNA"/>
</dbReference>
<dbReference type="EMBL" id="CP001896">
    <property type="protein sequence ID" value="ADC61035.1"/>
    <property type="molecule type" value="Genomic_DNA"/>
</dbReference>
<dbReference type="PIR" id="S29276">
    <property type="entry name" value="S29276"/>
</dbReference>
<dbReference type="RefSeq" id="WP_012969311.1">
    <property type="nucleotide sequence ID" value="NC_013851.1"/>
</dbReference>
<dbReference type="SMR" id="P45369"/>
<dbReference type="STRING" id="572477.Alvin_0063"/>
<dbReference type="KEGG" id="alv:Alvin_0063"/>
<dbReference type="eggNOG" id="COG0183">
    <property type="taxonomic scope" value="Bacteria"/>
</dbReference>
<dbReference type="HOGENOM" id="CLU_031026_0_0_6"/>
<dbReference type="OrthoDB" id="1402717at2"/>
<dbReference type="UniPathway" id="UPA00058">
    <property type="reaction ID" value="UER00101"/>
</dbReference>
<dbReference type="UniPathway" id="UPA00917"/>
<dbReference type="Proteomes" id="UP000001441">
    <property type="component" value="Chromosome"/>
</dbReference>
<dbReference type="GO" id="GO:0005737">
    <property type="term" value="C:cytoplasm"/>
    <property type="evidence" value="ECO:0007669"/>
    <property type="project" value="UniProtKB-SubCell"/>
</dbReference>
<dbReference type="GO" id="GO:0003985">
    <property type="term" value="F:acetyl-CoA C-acetyltransferase activity"/>
    <property type="evidence" value="ECO:0007669"/>
    <property type="project" value="UniProtKB-EC"/>
</dbReference>
<dbReference type="GO" id="GO:0042619">
    <property type="term" value="P:poly-hydroxybutyrate biosynthetic process"/>
    <property type="evidence" value="ECO:0007669"/>
    <property type="project" value="UniProtKB-KW"/>
</dbReference>
<dbReference type="CDD" id="cd00751">
    <property type="entry name" value="thiolase"/>
    <property type="match status" value="1"/>
</dbReference>
<dbReference type="FunFam" id="3.40.47.10:FF:000010">
    <property type="entry name" value="Acetyl-CoA acetyltransferase (Thiolase)"/>
    <property type="match status" value="1"/>
</dbReference>
<dbReference type="Gene3D" id="3.40.47.10">
    <property type="match status" value="2"/>
</dbReference>
<dbReference type="InterPro" id="IPR002155">
    <property type="entry name" value="Thiolase"/>
</dbReference>
<dbReference type="InterPro" id="IPR016039">
    <property type="entry name" value="Thiolase-like"/>
</dbReference>
<dbReference type="InterPro" id="IPR020615">
    <property type="entry name" value="Thiolase_acyl_enz_int_AS"/>
</dbReference>
<dbReference type="InterPro" id="IPR020610">
    <property type="entry name" value="Thiolase_AS"/>
</dbReference>
<dbReference type="InterPro" id="IPR020617">
    <property type="entry name" value="Thiolase_C"/>
</dbReference>
<dbReference type="InterPro" id="IPR020613">
    <property type="entry name" value="Thiolase_CS"/>
</dbReference>
<dbReference type="InterPro" id="IPR020616">
    <property type="entry name" value="Thiolase_N"/>
</dbReference>
<dbReference type="NCBIfam" id="TIGR01930">
    <property type="entry name" value="AcCoA-C-Actrans"/>
    <property type="match status" value="1"/>
</dbReference>
<dbReference type="PANTHER" id="PTHR18919:SF107">
    <property type="entry name" value="ACETYL-COA ACETYLTRANSFERASE, CYTOSOLIC"/>
    <property type="match status" value="1"/>
</dbReference>
<dbReference type="PANTHER" id="PTHR18919">
    <property type="entry name" value="ACETYL-COA C-ACYLTRANSFERASE"/>
    <property type="match status" value="1"/>
</dbReference>
<dbReference type="Pfam" id="PF02803">
    <property type="entry name" value="Thiolase_C"/>
    <property type="match status" value="1"/>
</dbReference>
<dbReference type="Pfam" id="PF00108">
    <property type="entry name" value="Thiolase_N"/>
    <property type="match status" value="1"/>
</dbReference>
<dbReference type="PIRSF" id="PIRSF000429">
    <property type="entry name" value="Ac-CoA_Ac_transf"/>
    <property type="match status" value="1"/>
</dbReference>
<dbReference type="SUPFAM" id="SSF53901">
    <property type="entry name" value="Thiolase-like"/>
    <property type="match status" value="2"/>
</dbReference>
<dbReference type="PROSITE" id="PS00098">
    <property type="entry name" value="THIOLASE_1"/>
    <property type="match status" value="1"/>
</dbReference>
<dbReference type="PROSITE" id="PS00737">
    <property type="entry name" value="THIOLASE_2"/>
    <property type="match status" value="1"/>
</dbReference>
<dbReference type="PROSITE" id="PS00099">
    <property type="entry name" value="THIOLASE_3"/>
    <property type="match status" value="1"/>
</dbReference>
<protein>
    <recommendedName>
        <fullName>Acetyl-CoA acetyltransferase</fullName>
        <ecNumber>2.3.1.9</ecNumber>
    </recommendedName>
    <alternativeName>
        <fullName>Acetoacetyl-CoA thiolase</fullName>
    </alternativeName>
    <alternativeName>
        <fullName evidence="5">Beta-ketothiolase</fullName>
    </alternativeName>
</protein>
<gene>
    <name evidence="6" type="primary">phaA</name>
    <name evidence="5" type="synonym">phbA</name>
    <name type="ordered locus">Alvin_0063</name>
</gene>